<comment type="function">
    <text evidence="3 4 5 6">Disease resistance (R) protein that specifically recognizes the AVR-Pik effector avirulence protein from M.oryzae. Resistance proteins guard the plant against pathogens that contain an appropriate avirulence protein via an indirect interaction with this avirulence protein. That triggers a defense system including the hypersensitive response, which restricts the pathogen growth. Contribution of Pik-2 is required to recognize the effector avirulence protein AVR-Pik.</text>
</comment>
<comment type="subunit">
    <text evidence="4 5">Interacts with AVR-Pik through its N-terminal part containing the HMA-like domain.</text>
</comment>
<comment type="domain">
    <text evidence="5">The HMA-like (RATX1) domain is responsible for the specific recognition of AVR effectors.</text>
</comment>
<comment type="similarity">
    <text evidence="8">Belongs to the disease resistance NB-LRR family.</text>
</comment>
<name>PIK1_ORYSJ</name>
<keyword id="KW-0067">ATP-binding</keyword>
<keyword id="KW-0175">Coiled coil</keyword>
<keyword id="KW-0433">Leucine-rich repeat</keyword>
<keyword id="KW-0547">Nucleotide-binding</keyword>
<keyword id="KW-0611">Plant defense</keyword>
<keyword id="KW-0677">Repeat</keyword>
<sequence length="1143" mass="126799">MEAAAMAVTAATGALAPVLVKLAALLDDGECNLLEGSRSDAEFIRSELEAVHSLLTPNILGRMGDDDAACKDGLIAEVRELSYDLDDAVDDFLELNFEQRRSASPFGELKARVEERVSNRFSDWKLPAASLPPSSVHRRAGLPPPDAGLVGMHKRKEELIELLEQGSSDASRWRKRKPHVPLRIMGGEMQKIVFKIPMVDDKSRTKAMSLVASTVGVHSVAIAGDLRDEVVVVGDGIDSINLVSALRKKVGHAELLQVSQVKEDVKEITAMLAPVKSICEFHEVKTICILGLPGGGKTTIARVLYHALGTQFQCRVFASISPSSSPSPNLTETLADIFAQAQLGVTDTLSTPYGGSGTGRALQQHLIDNISAFLLNKKYLIVIDDIWHWEEWEVIRKSIPKNDLGGRIIMTTRLNSIAEKCHTDDNDVFVYEVGDLDNNDALSLSWGIATKSGAGNRIGTGEDNSCYDIVNMCYGMPLALIWLSSALVGEIEELGGAEVKKCRDLRHIEDGILDIPSLQPLAESLCLGYNHLPLYLRTLLLYCSAYHWSNRIERGRLVRRWIAEGFVSEEKEAEGYFGELINRGWITQHGDNNSYNYYEIHPVMLAFLRCKSKEYNFLTCLGLGSDTSTSASSPRLIRRLSLQGGYPVDCLSSMSMDVSHTCSLVVLGDVARPKGIPFYMFKRLRVLDLEDNKDIQDSHLQGICEQLSLRVRYLGLKGTRIRKLPQEMRKLKHLEILYVGSTRISELPQEIGELKHLRILDVRNTDITELPLQIRELQHLHTLDVRNTPISELPPQVGKLQNLKIMCVRSTGVRELPKEIGELNHLQTLDVRNTRVRELPWQAGQISQSLRVLAGDSGDGVRLPEGVCEALINGIPGATRAKCREVLSIAIIDRFGPPLVGIFKVPGSHMRIPKMIKDHFRVLSCLDIRLCHKLEDDDQKFLAEMPNLQTLVLRFEALPRQPITINGTGFQMLESFRVDSRLPRIAFHEDAMPNLKLLEFKFYAGPASNDAIGITNLKSLQKVVFRCSPWYKSDAPGISATIDVVKKEAEEHPNRPITLLINAGYKEISTESHGSSENIAGSSGIDTEPAQAQHDNLPAVRDDYKGKGILLDGRCPTCGRATKIEEETQDRVADIEIQTETTS</sequence>
<feature type="chain" id="PRO_0000444663" description="Disease resistance protein Pik-1">
    <location>
        <begin position="1"/>
        <end position="1143"/>
    </location>
</feature>
<feature type="domain" description="HMA" evidence="2">
    <location>
        <begin position="189"/>
        <end position="258"/>
    </location>
</feature>
<feature type="domain" description="NB-ARC" evidence="1">
    <location>
        <begin position="282"/>
        <end position="570"/>
    </location>
</feature>
<feature type="repeat" description="LRR 1" evidence="1">
    <location>
        <begin position="681"/>
        <end position="706"/>
    </location>
</feature>
<feature type="repeat" description="LRR 2" evidence="1">
    <location>
        <begin position="708"/>
        <end position="731"/>
    </location>
</feature>
<feature type="repeat" description="LRR 3" evidence="1">
    <location>
        <begin position="732"/>
        <end position="754"/>
    </location>
</feature>
<feature type="repeat" description="LRR 4" evidence="1">
    <location>
        <begin position="756"/>
        <end position="777"/>
    </location>
</feature>
<feature type="repeat" description="LRR 5" evidence="1">
    <location>
        <begin position="778"/>
        <end position="800"/>
    </location>
</feature>
<feature type="repeat" description="LRR 6" evidence="1">
    <location>
        <begin position="802"/>
        <end position="823"/>
    </location>
</feature>
<feature type="repeat" description="LRR 7" evidence="1">
    <location>
        <begin position="824"/>
        <end position="848"/>
    </location>
</feature>
<feature type="repeat" description="LRR 8" evidence="1">
    <location>
        <begin position="945"/>
        <end position="968"/>
    </location>
</feature>
<feature type="repeat" description="LRR 9" evidence="1">
    <location>
        <begin position="979"/>
        <end position="1002"/>
    </location>
</feature>
<feature type="repeat" description="LRR 10" evidence="1">
    <location>
        <begin position="1004"/>
        <end position="1027"/>
    </location>
</feature>
<feature type="region of interest" description="Structured coiled coil (CC) domain" evidence="7">
    <location>
        <begin position="1"/>
        <end position="190"/>
    </location>
</feature>
<feature type="region of interest" description="HMA-like domain" evidence="5">
    <location>
        <begin position="191"/>
        <end position="264"/>
    </location>
</feature>
<feature type="sequence conflict" description="In Ref. 2; BAL63004/BAL63005." evidence="8" ref="2">
    <original>S</original>
    <variation>P</variation>
    <location>
        <position position="465"/>
    </location>
</feature>
<feature type="sequence conflict" description="In Ref. 2; BAL63004/BAL63005." evidence="8" ref="2">
    <original>G</original>
    <variation>R</variation>
    <location>
        <position position="495"/>
    </location>
</feature>
<proteinExistence type="evidence at protein level"/>
<gene>
    <name evidence="9" type="primary">PIK-1</name>
    <name evidence="10 11" type="synonym">PIK1-KA</name>
</gene>
<accession>F2VYU4</accession>
<accession>D5L9G3</accession>
<dbReference type="EMBL" id="HM048900">
    <property type="protein sequence ID" value="ADZ48537.1"/>
    <property type="molecule type" value="Genomic_DNA"/>
</dbReference>
<dbReference type="EMBL" id="AB616658">
    <property type="protein sequence ID" value="BAL63004.1"/>
    <property type="molecule type" value="mRNA"/>
</dbReference>
<dbReference type="EMBL" id="AB616659">
    <property type="protein sequence ID" value="BAL63005.1"/>
    <property type="molecule type" value="Genomic_DNA"/>
</dbReference>
<dbReference type="SMR" id="F2VYU4"/>
<dbReference type="GO" id="GO:0043531">
    <property type="term" value="F:ADP binding"/>
    <property type="evidence" value="ECO:0007669"/>
    <property type="project" value="InterPro"/>
</dbReference>
<dbReference type="GO" id="GO:0005524">
    <property type="term" value="F:ATP binding"/>
    <property type="evidence" value="ECO:0007669"/>
    <property type="project" value="UniProtKB-KW"/>
</dbReference>
<dbReference type="GO" id="GO:0046872">
    <property type="term" value="F:metal ion binding"/>
    <property type="evidence" value="ECO:0007669"/>
    <property type="project" value="InterPro"/>
</dbReference>
<dbReference type="GO" id="GO:0042742">
    <property type="term" value="P:defense response to bacterium"/>
    <property type="evidence" value="ECO:0000315"/>
    <property type="project" value="UniProtKB"/>
</dbReference>
<dbReference type="GO" id="GO:0002758">
    <property type="term" value="P:innate immune response-activating signaling pathway"/>
    <property type="evidence" value="ECO:0000315"/>
    <property type="project" value="UniProtKB"/>
</dbReference>
<dbReference type="GO" id="GO:0009626">
    <property type="term" value="P:plant-type hypersensitive response"/>
    <property type="evidence" value="ECO:0000315"/>
    <property type="project" value="UniProtKB"/>
</dbReference>
<dbReference type="FunFam" id="3.40.50.300:FF:003687">
    <property type="entry name" value="Disease resistance protein Pik-1"/>
    <property type="match status" value="1"/>
</dbReference>
<dbReference type="Gene3D" id="1.20.5.4130">
    <property type="match status" value="1"/>
</dbReference>
<dbReference type="Gene3D" id="3.30.70.100">
    <property type="match status" value="1"/>
</dbReference>
<dbReference type="Gene3D" id="3.40.50.300">
    <property type="entry name" value="P-loop containing nucleotide triphosphate hydrolases"/>
    <property type="match status" value="1"/>
</dbReference>
<dbReference type="Gene3D" id="3.80.10.10">
    <property type="entry name" value="Ribonuclease Inhibitor"/>
    <property type="match status" value="1"/>
</dbReference>
<dbReference type="Gene3D" id="1.10.10.10">
    <property type="entry name" value="Winged helix-like DNA-binding domain superfamily/Winged helix DNA-binding domain"/>
    <property type="match status" value="1"/>
</dbReference>
<dbReference type="InterPro" id="IPR044974">
    <property type="entry name" value="Disease_R_plants"/>
</dbReference>
<dbReference type="InterPro" id="IPR006121">
    <property type="entry name" value="HMA_dom"/>
</dbReference>
<dbReference type="InterPro" id="IPR003591">
    <property type="entry name" value="Leu-rich_rpt_typical-subtyp"/>
</dbReference>
<dbReference type="InterPro" id="IPR032675">
    <property type="entry name" value="LRR_dom_sf"/>
</dbReference>
<dbReference type="InterPro" id="IPR055414">
    <property type="entry name" value="LRR_R13L4/SHOC2-like"/>
</dbReference>
<dbReference type="InterPro" id="IPR002182">
    <property type="entry name" value="NB-ARC"/>
</dbReference>
<dbReference type="InterPro" id="IPR027417">
    <property type="entry name" value="P-loop_NTPase"/>
</dbReference>
<dbReference type="InterPro" id="IPR041118">
    <property type="entry name" value="Rx_N"/>
</dbReference>
<dbReference type="InterPro" id="IPR036388">
    <property type="entry name" value="WH-like_DNA-bd_sf"/>
</dbReference>
<dbReference type="PANTHER" id="PTHR23155">
    <property type="entry name" value="DISEASE RESISTANCE PROTEIN RP"/>
    <property type="match status" value="1"/>
</dbReference>
<dbReference type="PANTHER" id="PTHR23155:SF1205">
    <property type="entry name" value="DISEASE RESISTANCE PROTEIN RPM1"/>
    <property type="match status" value="1"/>
</dbReference>
<dbReference type="Pfam" id="PF23598">
    <property type="entry name" value="LRR_14"/>
    <property type="match status" value="3"/>
</dbReference>
<dbReference type="Pfam" id="PF00931">
    <property type="entry name" value="NB-ARC"/>
    <property type="match status" value="1"/>
</dbReference>
<dbReference type="Pfam" id="PF18052">
    <property type="entry name" value="Rx_N"/>
    <property type="match status" value="1"/>
</dbReference>
<dbReference type="Pfam" id="PF23559">
    <property type="entry name" value="WH_DRP"/>
    <property type="match status" value="1"/>
</dbReference>
<dbReference type="PRINTS" id="PR00364">
    <property type="entry name" value="DISEASERSIST"/>
</dbReference>
<dbReference type="SMART" id="SM00369">
    <property type="entry name" value="LRR_TYP"/>
    <property type="match status" value="3"/>
</dbReference>
<dbReference type="SUPFAM" id="SSF52540">
    <property type="entry name" value="P-loop containing nucleoside triphosphate hydrolases"/>
    <property type="match status" value="1"/>
</dbReference>
<dbReference type="SUPFAM" id="SSF52047">
    <property type="entry name" value="RNI-like"/>
    <property type="match status" value="1"/>
</dbReference>
<dbReference type="PROSITE" id="PS50846">
    <property type="entry name" value="HMA_2"/>
    <property type="match status" value="1"/>
</dbReference>
<protein>
    <recommendedName>
        <fullName evidence="8">Disease resistance protein Pik-1</fullName>
    </recommendedName>
    <alternativeName>
        <fullName evidence="9">Pik-1 blast resistance protein</fullName>
    </alternativeName>
</protein>
<organism>
    <name type="scientific">Oryza sativa subsp. japonica</name>
    <name type="common">Rice</name>
    <dbReference type="NCBI Taxonomy" id="39947"/>
    <lineage>
        <taxon>Eukaryota</taxon>
        <taxon>Viridiplantae</taxon>
        <taxon>Streptophyta</taxon>
        <taxon>Embryophyta</taxon>
        <taxon>Tracheophyta</taxon>
        <taxon>Spermatophyta</taxon>
        <taxon>Magnoliopsida</taxon>
        <taxon>Liliopsida</taxon>
        <taxon>Poales</taxon>
        <taxon>Poaceae</taxon>
        <taxon>BOP clade</taxon>
        <taxon>Oryzoideae</taxon>
        <taxon>Oryzeae</taxon>
        <taxon>Oryzinae</taxon>
        <taxon>Oryza</taxon>
        <taxon>Oryza sativa</taxon>
    </lineage>
</organism>
<reference key="1">
    <citation type="journal article" date="2011" name="New Phytol.">
        <title>The isolation and characterization of Pik, a rice blast resistance gene which emerged after rice domestication.</title>
        <authorList>
            <person name="Zhai C."/>
            <person name="Lin F."/>
            <person name="Dong Z."/>
            <person name="He X."/>
            <person name="Yuan B."/>
            <person name="Zeng X."/>
            <person name="Wang L."/>
            <person name="Pan Q."/>
        </authorList>
    </citation>
    <scope>NUCLEOTIDE SEQUENCE [GENOMIC DNA]</scope>
    <scope>FUNCTION</scope>
    <source>
        <strain>cv. Kusabue</strain>
    </source>
</reference>
<reference key="2">
    <citation type="journal article" date="2012" name="Mol. Breed.">
        <title>Characterization of the rice blast resistance gene Pik cloned from Kanto51.</title>
        <authorList>
            <person name="Ashikawa I."/>
            <person name="Hayashi N."/>
            <person name="Abe F."/>
            <person name="Wu J."/>
            <person name="Matsumoto T."/>
        </authorList>
    </citation>
    <scope>NUCLEOTIDE SEQUENCE [GENOMIC DNA / MRNA]</scope>
    <scope>FUNCTION</scope>
    <source>
        <strain>cv. Kanto 51</strain>
    </source>
</reference>
<reference key="3">
    <citation type="journal article" date="2012" name="Plant J.">
        <title>Arms race co-evolution of Magnaporthe oryzae AVR-Pik and rice Pik genes driven by their physical interactions.</title>
        <authorList>
            <person name="Kanzaki H."/>
            <person name="Yoshida K."/>
            <person name="Saitoh H."/>
            <person name="Fujisaki K."/>
            <person name="Hirabuchi A."/>
            <person name="Alaux L."/>
            <person name="Fournier E."/>
            <person name="Tharreau D."/>
            <person name="Terauchi R."/>
        </authorList>
    </citation>
    <scope>FUNCTION</scope>
    <scope>INTERACTION WITH AVR-PIK</scope>
    <source>
        <strain>cv. Kanto 51</strain>
    </source>
</reference>
<reference key="4">
    <citation type="journal article" date="2013" name="Plant Cell">
        <title>The rice resistance protein pair RGA4/RGA5 recognizes the Magnaporthe oryzae effectors AVR-Pia and AVR1-CO39 by direct binding.</title>
        <authorList>
            <person name="Cesari S."/>
            <person name="Thilliez G."/>
            <person name="Ribot C."/>
            <person name="Chalvon V."/>
            <person name="Michel C."/>
            <person name="Jauneau A."/>
            <person name="Rivas S."/>
            <person name="Alaux L."/>
            <person name="Kanzaki H."/>
            <person name="Okuyama Y."/>
            <person name="Morel J.B."/>
            <person name="Fournier E."/>
            <person name="Tharreau D."/>
            <person name="Terauchi R."/>
            <person name="Kroj T."/>
        </authorList>
    </citation>
    <scope>FUNCTION</scope>
    <scope>INTERACTION WITH AVR-PIK</scope>
    <scope>DOMAIN</scope>
</reference>
<evidence type="ECO:0000255" key="1"/>
<evidence type="ECO:0000255" key="2">
    <source>
        <dbReference type="PROSITE-ProRule" id="PRU00280"/>
    </source>
</evidence>
<evidence type="ECO:0000269" key="3">
    <source>
    </source>
</evidence>
<evidence type="ECO:0000269" key="4">
    <source>
    </source>
</evidence>
<evidence type="ECO:0000269" key="5">
    <source>
    </source>
</evidence>
<evidence type="ECO:0000269" key="6">
    <source ref="2"/>
</evidence>
<evidence type="ECO:0000303" key="7">
    <source>
    </source>
</evidence>
<evidence type="ECO:0000305" key="8"/>
<evidence type="ECO:0000312" key="9">
    <source>
        <dbReference type="EMBL" id="ADZ48537.1"/>
    </source>
</evidence>
<evidence type="ECO:0000312" key="10">
    <source>
        <dbReference type="EMBL" id="BAL63004.1"/>
    </source>
</evidence>
<evidence type="ECO:0000312" key="11">
    <source>
        <dbReference type="EMBL" id="BAL63005.1"/>
    </source>
</evidence>